<gene>
    <name type="primary">EXOSC5</name>
    <name type="synonym">CML28</name>
    <name type="synonym">RRP46</name>
</gene>
<evidence type="ECO:0000256" key="1">
    <source>
        <dbReference type="SAM" id="MobiDB-lite"/>
    </source>
</evidence>
<evidence type="ECO:0000269" key="2">
    <source>
    </source>
</evidence>
<evidence type="ECO:0000269" key="3">
    <source>
    </source>
</evidence>
<evidence type="ECO:0000269" key="4">
    <source>
    </source>
</evidence>
<evidence type="ECO:0000269" key="5">
    <source>
    </source>
</evidence>
<evidence type="ECO:0000269" key="6">
    <source>
    </source>
</evidence>
<evidence type="ECO:0000269" key="7">
    <source>
    </source>
</evidence>
<evidence type="ECO:0000269" key="8">
    <source>
    </source>
</evidence>
<evidence type="ECO:0000269" key="9">
    <source>
    </source>
</evidence>
<evidence type="ECO:0000269" key="10">
    <source>
    </source>
</evidence>
<evidence type="ECO:0000269" key="11">
    <source>
    </source>
</evidence>
<evidence type="ECO:0000269" key="12">
    <source>
    </source>
</evidence>
<evidence type="ECO:0000269" key="13">
    <source>
    </source>
</evidence>
<evidence type="ECO:0000269" key="14">
    <source>
    </source>
</evidence>
<evidence type="ECO:0000269" key="15">
    <source>
    </source>
</evidence>
<evidence type="ECO:0000269" key="16">
    <source>
    </source>
</evidence>
<evidence type="ECO:0000305" key="17"/>
<evidence type="ECO:0000305" key="18">
    <source>
    </source>
</evidence>
<evidence type="ECO:0007744" key="19">
    <source>
        <dbReference type="PDB" id="2NN6"/>
    </source>
</evidence>
<evidence type="ECO:0007744" key="20">
    <source>
        <dbReference type="PDB" id="6D6Q"/>
    </source>
</evidence>
<evidence type="ECO:0007744" key="21">
    <source>
        <dbReference type="PDB" id="6D6R"/>
    </source>
</evidence>
<evidence type="ECO:0007744" key="22">
    <source>
        <dbReference type="PDB" id="6H25"/>
    </source>
</evidence>
<evidence type="ECO:0007744" key="23">
    <source>
    </source>
</evidence>
<evidence type="ECO:0007744" key="24">
    <source>
    </source>
</evidence>
<evidence type="ECO:0007829" key="25">
    <source>
        <dbReference type="PDB" id="2NN6"/>
    </source>
</evidence>
<evidence type="ECO:0007829" key="26">
    <source>
        <dbReference type="PDB" id="6D6Q"/>
    </source>
</evidence>
<dbReference type="EMBL" id="AF281134">
    <property type="protein sequence ID" value="AAF82135.1"/>
    <property type="molecule type" value="mRNA"/>
</dbReference>
<dbReference type="EMBL" id="AF285785">
    <property type="protein sequence ID" value="AAM75154.1"/>
    <property type="status" value="ALT_INIT"/>
    <property type="molecule type" value="mRNA"/>
</dbReference>
<dbReference type="EMBL" id="AC011462">
    <property type="status" value="NOT_ANNOTATED_CDS"/>
    <property type="molecule type" value="Genomic_DNA"/>
</dbReference>
<dbReference type="EMBL" id="BC007742">
    <property type="protein sequence ID" value="AAH07742.1"/>
    <property type="molecule type" value="mRNA"/>
</dbReference>
<dbReference type="EMBL" id="BC107696">
    <property type="protein sequence ID" value="AAI07697.1"/>
    <property type="molecule type" value="mRNA"/>
</dbReference>
<dbReference type="CCDS" id="CCDS12580.1"/>
<dbReference type="RefSeq" id="NP_064543.3">
    <property type="nucleotide sequence ID" value="NM_020158.3"/>
</dbReference>
<dbReference type="PDB" id="2NN6">
    <property type="method" value="X-ray"/>
    <property type="resolution" value="3.35 A"/>
    <property type="chains" value="D=1-235"/>
</dbReference>
<dbReference type="PDB" id="6D6Q">
    <property type="method" value="EM"/>
    <property type="resolution" value="3.45 A"/>
    <property type="chains" value="D=1-235"/>
</dbReference>
<dbReference type="PDB" id="6D6R">
    <property type="method" value="EM"/>
    <property type="resolution" value="3.45 A"/>
    <property type="chains" value="D=1-235"/>
</dbReference>
<dbReference type="PDB" id="6H25">
    <property type="method" value="EM"/>
    <property type="resolution" value="3.80 A"/>
    <property type="chains" value="D=1-235"/>
</dbReference>
<dbReference type="PDB" id="9G8M">
    <property type="method" value="EM"/>
    <property type="resolution" value="3.30 A"/>
    <property type="chains" value="O=1-235"/>
</dbReference>
<dbReference type="PDB" id="9G8N">
    <property type="method" value="EM"/>
    <property type="resolution" value="3.70 A"/>
    <property type="chains" value="O=1-235"/>
</dbReference>
<dbReference type="PDB" id="9G8O">
    <property type="method" value="EM"/>
    <property type="resolution" value="3.40 A"/>
    <property type="chains" value="O=1-235"/>
</dbReference>
<dbReference type="PDB" id="9G8P">
    <property type="method" value="EM"/>
    <property type="resolution" value="7.00 A"/>
    <property type="chains" value="O=1-235"/>
</dbReference>
<dbReference type="PDBsum" id="2NN6"/>
<dbReference type="PDBsum" id="6D6Q"/>
<dbReference type="PDBsum" id="6D6R"/>
<dbReference type="PDBsum" id="6H25"/>
<dbReference type="PDBsum" id="9G8M"/>
<dbReference type="PDBsum" id="9G8N"/>
<dbReference type="PDBsum" id="9G8O"/>
<dbReference type="PDBsum" id="9G8P"/>
<dbReference type="EMDB" id="EMD-0127"/>
<dbReference type="EMDB" id="EMD-0128"/>
<dbReference type="EMDB" id="EMD-14515"/>
<dbReference type="EMDB" id="EMD-51132"/>
<dbReference type="EMDB" id="EMD-51133"/>
<dbReference type="EMDB" id="EMD-51134"/>
<dbReference type="EMDB" id="EMD-51135"/>
<dbReference type="EMDB" id="EMD-7808"/>
<dbReference type="EMDB" id="EMD-7809"/>
<dbReference type="SMR" id="Q9NQT4"/>
<dbReference type="BioGRID" id="121243">
    <property type="interactions" value="171"/>
</dbReference>
<dbReference type="ComplexPortal" id="CPX-476">
    <property type="entry name" value="Nuclear exosome complex, DIS3-EXOSC10 variant"/>
</dbReference>
<dbReference type="ComplexPortal" id="CPX-591">
    <property type="entry name" value="Nucleolar exosome complex, EXOSC10 variant"/>
</dbReference>
<dbReference type="ComplexPortal" id="CPX-592">
    <property type="entry name" value="Cytoplasmic exosome complex, DIS3L variant"/>
</dbReference>
<dbReference type="ComplexPortal" id="CPX-593">
    <property type="entry name" value="Exosome complex, DIS3 variant"/>
</dbReference>
<dbReference type="ComplexPortal" id="CPX-600">
    <property type="entry name" value="Cytoplasmic exosome complex, DIS3L-EXOSC10 variant"/>
</dbReference>
<dbReference type="CORUM" id="Q9NQT4"/>
<dbReference type="DIP" id="DIP-29846N"/>
<dbReference type="FunCoup" id="Q9NQT4">
    <property type="interactions" value="1451"/>
</dbReference>
<dbReference type="IntAct" id="Q9NQT4">
    <property type="interactions" value="411"/>
</dbReference>
<dbReference type="MINT" id="Q9NQT4"/>
<dbReference type="STRING" id="9606.ENSP00000221233"/>
<dbReference type="GlyGen" id="Q9NQT4">
    <property type="glycosylation" value="2 sites, 1 N-linked glycan (1 site), 1 O-linked glycan (1 site)"/>
</dbReference>
<dbReference type="iPTMnet" id="Q9NQT4"/>
<dbReference type="PhosphoSitePlus" id="Q9NQT4"/>
<dbReference type="SwissPalm" id="Q9NQT4"/>
<dbReference type="BioMuta" id="EXOSC5"/>
<dbReference type="DMDM" id="14285757"/>
<dbReference type="jPOST" id="Q9NQT4"/>
<dbReference type="MassIVE" id="Q9NQT4"/>
<dbReference type="PaxDb" id="9606-ENSP00000221233"/>
<dbReference type="PeptideAtlas" id="Q9NQT4"/>
<dbReference type="ProteomicsDB" id="82183"/>
<dbReference type="Pumba" id="Q9NQT4"/>
<dbReference type="Antibodypedia" id="30775">
    <property type="antibodies" value="198 antibodies from 25 providers"/>
</dbReference>
<dbReference type="DNASU" id="56915"/>
<dbReference type="Ensembl" id="ENST00000221233.9">
    <property type="protein sequence ID" value="ENSP00000221233.3"/>
    <property type="gene ID" value="ENSG00000077348.10"/>
</dbReference>
<dbReference type="GeneID" id="56915"/>
<dbReference type="KEGG" id="hsa:56915"/>
<dbReference type="MANE-Select" id="ENST00000221233.9">
    <property type="protein sequence ID" value="ENSP00000221233.3"/>
    <property type="RefSeq nucleotide sequence ID" value="NM_020158.4"/>
    <property type="RefSeq protein sequence ID" value="NP_064543.3"/>
</dbReference>
<dbReference type="UCSC" id="uc002oqo.4">
    <property type="organism name" value="human"/>
</dbReference>
<dbReference type="AGR" id="HGNC:24662"/>
<dbReference type="CTD" id="56915"/>
<dbReference type="DisGeNET" id="56915"/>
<dbReference type="GeneCards" id="EXOSC5"/>
<dbReference type="HGNC" id="HGNC:24662">
    <property type="gene designation" value="EXOSC5"/>
</dbReference>
<dbReference type="HPA" id="ENSG00000077348">
    <property type="expression patterns" value="Low tissue specificity"/>
</dbReference>
<dbReference type="MalaCards" id="EXOSC5"/>
<dbReference type="MIM" id="606492">
    <property type="type" value="gene"/>
</dbReference>
<dbReference type="MIM" id="619576">
    <property type="type" value="phenotype"/>
</dbReference>
<dbReference type="neXtProt" id="NX_Q9NQT4"/>
<dbReference type="OpenTargets" id="ENSG00000077348"/>
<dbReference type="Orphanet" id="641361">
    <property type="disease" value="Neurodevelopmental delay-hypotonia-cerebellar ataxia-cardiac conduction defects syndrome"/>
</dbReference>
<dbReference type="PharmGKB" id="PA134890468"/>
<dbReference type="VEuPathDB" id="HostDB:ENSG00000077348"/>
<dbReference type="eggNOG" id="KOG1069">
    <property type="taxonomic scope" value="Eukaryota"/>
</dbReference>
<dbReference type="GeneTree" id="ENSGT00940000153348"/>
<dbReference type="HOGENOM" id="CLU_063514_2_3_1"/>
<dbReference type="InParanoid" id="Q9NQT4"/>
<dbReference type="OMA" id="CIINEQG"/>
<dbReference type="OrthoDB" id="27298at2759"/>
<dbReference type="PAN-GO" id="Q9NQT4">
    <property type="GO annotations" value="8 GO annotations based on evolutionary models"/>
</dbReference>
<dbReference type="PhylomeDB" id="Q9NQT4"/>
<dbReference type="TreeFam" id="TF315920"/>
<dbReference type="PathwayCommons" id="Q9NQT4"/>
<dbReference type="Reactome" id="R-HSA-380994">
    <property type="pathway name" value="ATF4 activates genes in response to endoplasmic reticulum stress"/>
</dbReference>
<dbReference type="Reactome" id="R-HSA-429958">
    <property type="pathway name" value="mRNA decay by 3' to 5' exoribonuclease"/>
</dbReference>
<dbReference type="Reactome" id="R-HSA-450385">
    <property type="pathway name" value="Butyrate Response Factor 1 (BRF1) binds and destabilizes mRNA"/>
</dbReference>
<dbReference type="Reactome" id="R-HSA-450513">
    <property type="pathway name" value="Tristetraprolin (TTP, ZFP36) binds and destabilizes mRNA"/>
</dbReference>
<dbReference type="Reactome" id="R-HSA-450604">
    <property type="pathway name" value="KSRP (KHSRP) binds and destabilizes mRNA"/>
</dbReference>
<dbReference type="Reactome" id="R-HSA-6791226">
    <property type="pathway name" value="Major pathway of rRNA processing in the nucleolus and cytosol"/>
</dbReference>
<dbReference type="SignaLink" id="Q9NQT4"/>
<dbReference type="SIGNOR" id="Q9NQT4"/>
<dbReference type="BioGRID-ORCS" id="56915">
    <property type="hits" value="693 hits in 1142 CRISPR screens"/>
</dbReference>
<dbReference type="CD-CODE" id="91857CE7">
    <property type="entry name" value="Nucleolus"/>
</dbReference>
<dbReference type="EvolutionaryTrace" id="Q9NQT4"/>
<dbReference type="GeneWiki" id="Exosome_component_5"/>
<dbReference type="GenomeRNAi" id="56915"/>
<dbReference type="Pharos" id="Q9NQT4">
    <property type="development level" value="Tbio"/>
</dbReference>
<dbReference type="PRO" id="PR:Q9NQT4"/>
<dbReference type="Proteomes" id="UP000005640">
    <property type="component" value="Chromosome 19"/>
</dbReference>
<dbReference type="RNAct" id="Q9NQT4">
    <property type="molecule type" value="protein"/>
</dbReference>
<dbReference type="Bgee" id="ENSG00000077348">
    <property type="expression patterns" value="Expressed in monocyte and 135 other cell types or tissues"/>
</dbReference>
<dbReference type="ExpressionAtlas" id="Q9NQT4">
    <property type="expression patterns" value="baseline and differential"/>
</dbReference>
<dbReference type="GO" id="GO:0005737">
    <property type="term" value="C:cytoplasm"/>
    <property type="evidence" value="ECO:0000303"/>
    <property type="project" value="UniProtKB"/>
</dbReference>
<dbReference type="GO" id="GO:0000177">
    <property type="term" value="C:cytoplasmic exosome (RNase complex)"/>
    <property type="evidence" value="ECO:0000318"/>
    <property type="project" value="GO_Central"/>
</dbReference>
<dbReference type="GO" id="GO:0005829">
    <property type="term" value="C:cytosol"/>
    <property type="evidence" value="ECO:0000314"/>
    <property type="project" value="ComplexPortal"/>
</dbReference>
<dbReference type="GO" id="GO:0000791">
    <property type="term" value="C:euchromatin"/>
    <property type="evidence" value="ECO:0000315"/>
    <property type="project" value="UniProtKB"/>
</dbReference>
<dbReference type="GO" id="GO:0000178">
    <property type="term" value="C:exosome (RNase complex)"/>
    <property type="evidence" value="ECO:0000314"/>
    <property type="project" value="UniProtKB"/>
</dbReference>
<dbReference type="GO" id="GO:0000176">
    <property type="term" value="C:nuclear exosome (RNase complex)"/>
    <property type="evidence" value="ECO:0000318"/>
    <property type="project" value="GO_Central"/>
</dbReference>
<dbReference type="GO" id="GO:0101019">
    <property type="term" value="C:nucleolar exosome (RNase complex)"/>
    <property type="evidence" value="ECO:0000303"/>
    <property type="project" value="ComplexPortal"/>
</dbReference>
<dbReference type="GO" id="GO:0005730">
    <property type="term" value="C:nucleolus"/>
    <property type="evidence" value="ECO:0000314"/>
    <property type="project" value="HPA"/>
</dbReference>
<dbReference type="GO" id="GO:0005654">
    <property type="term" value="C:nucleoplasm"/>
    <property type="evidence" value="ECO:0000314"/>
    <property type="project" value="HPA"/>
</dbReference>
<dbReference type="GO" id="GO:0005634">
    <property type="term" value="C:nucleus"/>
    <property type="evidence" value="ECO:0000314"/>
    <property type="project" value="ComplexPortal"/>
</dbReference>
<dbReference type="GO" id="GO:0000175">
    <property type="term" value="F:3'-5'-RNA exonuclease activity"/>
    <property type="evidence" value="ECO:0000303"/>
    <property type="project" value="UniProtKB"/>
</dbReference>
<dbReference type="GO" id="GO:0003677">
    <property type="term" value="F:DNA binding"/>
    <property type="evidence" value="ECO:0007669"/>
    <property type="project" value="UniProtKB-KW"/>
</dbReference>
<dbReference type="GO" id="GO:0003723">
    <property type="term" value="F:RNA binding"/>
    <property type="evidence" value="ECO:0000318"/>
    <property type="project" value="GO_Central"/>
</dbReference>
<dbReference type="GO" id="GO:0051607">
    <property type="term" value="P:defense response to virus"/>
    <property type="evidence" value="ECO:0000315"/>
    <property type="project" value="MGI"/>
</dbReference>
<dbReference type="GO" id="GO:0045006">
    <property type="term" value="P:DNA deamination"/>
    <property type="evidence" value="ECO:0000314"/>
    <property type="project" value="UniProtKB"/>
</dbReference>
<dbReference type="GO" id="GO:0006402">
    <property type="term" value="P:mRNA catabolic process"/>
    <property type="evidence" value="ECO:0000315"/>
    <property type="project" value="UniProtKB"/>
</dbReference>
<dbReference type="GO" id="GO:0071028">
    <property type="term" value="P:nuclear mRNA surveillance"/>
    <property type="evidence" value="ECO:0000318"/>
    <property type="project" value="GO_Central"/>
</dbReference>
<dbReference type="GO" id="GO:0071051">
    <property type="term" value="P:poly(A)-dependent snoRNA 3'-end processing"/>
    <property type="evidence" value="ECO:0000318"/>
    <property type="project" value="GO_Central"/>
</dbReference>
<dbReference type="GO" id="GO:0006401">
    <property type="term" value="P:RNA catabolic process"/>
    <property type="evidence" value="ECO:0000314"/>
    <property type="project" value="ComplexPortal"/>
</dbReference>
<dbReference type="GO" id="GO:0006396">
    <property type="term" value="P:RNA processing"/>
    <property type="evidence" value="ECO:0000314"/>
    <property type="project" value="ComplexPortal"/>
</dbReference>
<dbReference type="GO" id="GO:0016075">
    <property type="term" value="P:rRNA catabolic process"/>
    <property type="evidence" value="ECO:0000318"/>
    <property type="project" value="GO_Central"/>
</dbReference>
<dbReference type="GO" id="GO:0006364">
    <property type="term" value="P:rRNA processing"/>
    <property type="evidence" value="ECO:0000303"/>
    <property type="project" value="UniProtKB"/>
</dbReference>
<dbReference type="GO" id="GO:0034475">
    <property type="term" value="P:U4 snRNA 3'-end processing"/>
    <property type="evidence" value="ECO:0000318"/>
    <property type="project" value="GO_Central"/>
</dbReference>
<dbReference type="CDD" id="cd11372">
    <property type="entry name" value="RNase_PH_RRP46"/>
    <property type="match status" value="1"/>
</dbReference>
<dbReference type="FunFam" id="3.30.230.70:FF:000012">
    <property type="entry name" value="exosome complex component RRP46"/>
    <property type="match status" value="1"/>
</dbReference>
<dbReference type="Gene3D" id="3.30.230.70">
    <property type="entry name" value="GHMP Kinase, N-terminal domain"/>
    <property type="match status" value="1"/>
</dbReference>
<dbReference type="InterPro" id="IPR001247">
    <property type="entry name" value="ExoRNase_PH_dom1"/>
</dbReference>
<dbReference type="InterPro" id="IPR015847">
    <property type="entry name" value="ExoRNase_PH_dom2"/>
</dbReference>
<dbReference type="InterPro" id="IPR036345">
    <property type="entry name" value="ExoRNase_PH_dom2_sf"/>
</dbReference>
<dbReference type="InterPro" id="IPR027408">
    <property type="entry name" value="PNPase/RNase_PH_dom_sf"/>
</dbReference>
<dbReference type="InterPro" id="IPR020568">
    <property type="entry name" value="Ribosomal_Su5_D2-typ_SF"/>
</dbReference>
<dbReference type="InterPro" id="IPR050080">
    <property type="entry name" value="RNase_PH"/>
</dbReference>
<dbReference type="PANTHER" id="PTHR11953">
    <property type="entry name" value="EXOSOME COMPLEX COMPONENT"/>
    <property type="match status" value="1"/>
</dbReference>
<dbReference type="PANTHER" id="PTHR11953:SF1">
    <property type="entry name" value="EXOSOME COMPLEX COMPONENT RRP46"/>
    <property type="match status" value="1"/>
</dbReference>
<dbReference type="Pfam" id="PF01138">
    <property type="entry name" value="RNase_PH"/>
    <property type="match status" value="1"/>
</dbReference>
<dbReference type="Pfam" id="PF03725">
    <property type="entry name" value="RNase_PH_C"/>
    <property type="match status" value="1"/>
</dbReference>
<dbReference type="SUPFAM" id="SSF55666">
    <property type="entry name" value="Ribonuclease PH domain 2-like"/>
    <property type="match status" value="1"/>
</dbReference>
<dbReference type="SUPFAM" id="SSF54211">
    <property type="entry name" value="Ribosomal protein S5 domain 2-like"/>
    <property type="match status" value="1"/>
</dbReference>
<sequence length="235" mass="25249">MEEETHTDAKIRAENGTGSSPRGPGCSLRHFACEQNLLSRPDGSASFLQGDTSVLAGVYGPAEVKVSKEIFNKATLEVILRPKIGLPGVAEKSRERLIRNTCEAVVLGTLHPRTSITVVLQVVSDAGSLLACCLNAACMALVDAGVPMRALFCGVACALDSDGTLVLDPTSKQEKEARAVLTFALDSVERKLLMSSTKGLYSDTELQQCLAAAQAASQHVFRFYRESLQRRYSKS</sequence>
<accession>Q9NQT4</accession>
<accession>Q32Q81</accession>
<accession>Q8NG16</accession>
<accession>Q96I89</accession>
<keyword id="KW-0002">3D-structure</keyword>
<keyword id="KW-0963">Cytoplasm</keyword>
<keyword id="KW-0225">Disease variant</keyword>
<keyword id="KW-0238">DNA-binding</keyword>
<keyword id="KW-0271">Exosome</keyword>
<keyword id="KW-0991">Intellectual disability</keyword>
<keyword id="KW-0539">Nucleus</keyword>
<keyword id="KW-0597">Phosphoprotein</keyword>
<keyword id="KW-1267">Proteomics identification</keyword>
<keyword id="KW-1185">Reference proteome</keyword>
<keyword id="KW-0698">rRNA processing</keyword>
<feature type="chain" id="PRO_0000139975" description="Exosome complex component RRP46">
    <location>
        <begin position="1"/>
        <end position="235"/>
    </location>
</feature>
<feature type="region of interest" description="Disordered" evidence="1">
    <location>
        <begin position="1"/>
        <end position="24"/>
    </location>
</feature>
<feature type="compositionally biased region" description="Basic and acidic residues" evidence="1">
    <location>
        <begin position="1"/>
        <end position="13"/>
    </location>
</feature>
<feature type="modified residue" description="Phosphoserine" evidence="23 24">
    <location>
        <position position="20"/>
    </location>
</feature>
<feature type="sequence variant" id="VAR_030788" description="In dbSNP:rs10853751." evidence="5">
    <original>T</original>
    <variation>M</variation>
    <location>
        <position position="5"/>
    </location>
</feature>
<feature type="sequence variant" id="VAR_051868" description="In dbSNP:rs34500671.">
    <original>C</original>
    <variation>W</variation>
    <location>
        <position position="33"/>
    </location>
</feature>
<feature type="sequence variant" id="VAR_086374" description="In CABAC; dbSNP:rs777418116." evidence="16">
    <original>T</original>
    <variation>K</variation>
    <location>
        <position position="101"/>
    </location>
</feature>
<feature type="sequence variant" id="VAR_086375" description="In CABAC; decreased interaction with EXOSC3, EXOSC9 and EXOSC10, when assayed in a heterologous system; dbSNP:rs542429051." evidence="14 15 16">
    <original>T</original>
    <variation>I</variation>
    <location>
        <position position="114"/>
    </location>
</feature>
<feature type="sequence variant" id="VAR_086376" description="In CABAC; uncertain significance; no detectable effect on interaction with EXOSC3, EXOSC9 and EXOSC10, when assayed in a heterologous system; dbSNP:rs367988911." evidence="15">
    <original>M</original>
    <variation>T</variation>
    <location>
        <position position="148"/>
    </location>
</feature>
<feature type="sequence variant" id="VAR_086377" description="In CABAC; strongly decreased interaction with EXOSC3, EXOSC9 and EXOSC10, when assayed in a heterologous system; dbSNP:rs2123217925." evidence="15">
    <original>L</original>
    <variation>H</variation>
    <location>
        <position position="206"/>
    </location>
</feature>
<feature type="strand" evidence="25">
    <location>
        <begin position="31"/>
        <end position="36"/>
    </location>
</feature>
<feature type="strand" evidence="25">
    <location>
        <begin position="39"/>
        <end position="49"/>
    </location>
</feature>
<feature type="strand" evidence="25">
    <location>
        <begin position="52"/>
        <end position="63"/>
    </location>
</feature>
<feature type="turn" evidence="26">
    <location>
        <begin position="66"/>
        <end position="68"/>
    </location>
</feature>
<feature type="strand" evidence="25">
    <location>
        <begin position="74"/>
        <end position="81"/>
    </location>
</feature>
<feature type="strand" evidence="25">
    <location>
        <begin position="83"/>
        <end position="85"/>
    </location>
</feature>
<feature type="helix" evidence="25">
    <location>
        <begin position="89"/>
        <end position="105"/>
    </location>
</feature>
<feature type="helix" evidence="25">
    <location>
        <begin position="107"/>
        <end position="109"/>
    </location>
</feature>
<feature type="strand" evidence="25">
    <location>
        <begin position="111"/>
        <end position="124"/>
    </location>
</feature>
<feature type="helix" evidence="25">
    <location>
        <begin position="129"/>
        <end position="143"/>
    </location>
</feature>
<feature type="strand" evidence="26">
    <location>
        <begin position="148"/>
        <end position="150"/>
    </location>
</feature>
<feature type="strand" evidence="25">
    <location>
        <begin position="152"/>
        <end position="159"/>
    </location>
</feature>
<feature type="strand" evidence="25">
    <location>
        <begin position="165"/>
        <end position="168"/>
    </location>
</feature>
<feature type="helix" evidence="25">
    <location>
        <begin position="171"/>
        <end position="176"/>
    </location>
</feature>
<feature type="strand" evidence="25">
    <location>
        <begin position="178"/>
        <end position="186"/>
    </location>
</feature>
<feature type="turn" evidence="25">
    <location>
        <begin position="187"/>
        <end position="189"/>
    </location>
</feature>
<feature type="strand" evidence="25">
    <location>
        <begin position="194"/>
        <end position="200"/>
    </location>
</feature>
<feature type="helix" evidence="25">
    <location>
        <begin position="203"/>
        <end position="231"/>
    </location>
</feature>
<proteinExistence type="evidence at protein level"/>
<protein>
    <recommendedName>
        <fullName>Exosome complex component RRP46</fullName>
    </recommendedName>
    <alternativeName>
        <fullName>Chronic myelogenous leukemia tumor antigen 28</fullName>
    </alternativeName>
    <alternativeName>
        <fullName>Exosome component 5</fullName>
    </alternativeName>
    <alternativeName>
        <fullName>Ribosomal RNA-processing protein 46</fullName>
    </alternativeName>
    <alternativeName>
        <fullName>p12B</fullName>
    </alternativeName>
</protein>
<reference key="1">
    <citation type="journal article" date="2001" name="J. Biol. Chem.">
        <title>Three novel components of the human exosome.</title>
        <authorList>
            <person name="Brouwer R."/>
            <person name="Allmang C."/>
            <person name="Raijmakers R."/>
            <person name="van Aarssen Y."/>
            <person name="Egberts W.V."/>
            <person name="Petfalski E."/>
            <person name="van Venrooij W.J."/>
            <person name="Tollervey D."/>
            <person name="Pruijn G.J.M."/>
        </authorList>
    </citation>
    <scope>NUCLEOTIDE SEQUENCE [MRNA]</scope>
    <scope>CHARACTERIZATION</scope>
</reference>
<reference key="2">
    <citation type="journal article" date="2002" name="Cancer Res.">
        <title>CML28 is a broadly immunogenic antigen, which is overexpressed in tumor cells.</title>
        <authorList>
            <person name="Yang X.-F."/>
            <person name="Wu C.J."/>
            <person name="Chen L."/>
            <person name="Alyea E.P."/>
            <person name="Canning C."/>
            <person name="Kantoff P."/>
            <person name="Soiffer R.J."/>
            <person name="Dranoff G."/>
            <person name="Ritz J."/>
        </authorList>
    </citation>
    <scope>NUCLEOTIDE SEQUENCE [MRNA]</scope>
</reference>
<reference key="3">
    <citation type="journal article" date="2004" name="Nature">
        <title>The DNA sequence and biology of human chromosome 19.</title>
        <authorList>
            <person name="Grimwood J."/>
            <person name="Gordon L.A."/>
            <person name="Olsen A.S."/>
            <person name="Terry A."/>
            <person name="Schmutz J."/>
            <person name="Lamerdin J.E."/>
            <person name="Hellsten U."/>
            <person name="Goodstein D."/>
            <person name="Couronne O."/>
            <person name="Tran-Gyamfi M."/>
            <person name="Aerts A."/>
            <person name="Altherr M."/>
            <person name="Ashworth L."/>
            <person name="Bajorek E."/>
            <person name="Black S."/>
            <person name="Branscomb E."/>
            <person name="Caenepeel S."/>
            <person name="Carrano A.V."/>
            <person name="Caoile C."/>
            <person name="Chan Y.M."/>
            <person name="Christensen M."/>
            <person name="Cleland C.A."/>
            <person name="Copeland A."/>
            <person name="Dalin E."/>
            <person name="Dehal P."/>
            <person name="Denys M."/>
            <person name="Detter J.C."/>
            <person name="Escobar J."/>
            <person name="Flowers D."/>
            <person name="Fotopulos D."/>
            <person name="Garcia C."/>
            <person name="Georgescu A.M."/>
            <person name="Glavina T."/>
            <person name="Gomez M."/>
            <person name="Gonzales E."/>
            <person name="Groza M."/>
            <person name="Hammon N."/>
            <person name="Hawkins T."/>
            <person name="Haydu L."/>
            <person name="Ho I."/>
            <person name="Huang W."/>
            <person name="Israni S."/>
            <person name="Jett J."/>
            <person name="Kadner K."/>
            <person name="Kimball H."/>
            <person name="Kobayashi A."/>
            <person name="Larionov V."/>
            <person name="Leem S.-H."/>
            <person name="Lopez F."/>
            <person name="Lou Y."/>
            <person name="Lowry S."/>
            <person name="Malfatti S."/>
            <person name="Martinez D."/>
            <person name="McCready P.M."/>
            <person name="Medina C."/>
            <person name="Morgan J."/>
            <person name="Nelson K."/>
            <person name="Nolan M."/>
            <person name="Ovcharenko I."/>
            <person name="Pitluck S."/>
            <person name="Pollard M."/>
            <person name="Popkie A.P."/>
            <person name="Predki P."/>
            <person name="Quan G."/>
            <person name="Ramirez L."/>
            <person name="Rash S."/>
            <person name="Retterer J."/>
            <person name="Rodriguez A."/>
            <person name="Rogers S."/>
            <person name="Salamov A."/>
            <person name="Salazar A."/>
            <person name="She X."/>
            <person name="Smith D."/>
            <person name="Slezak T."/>
            <person name="Solovyev V."/>
            <person name="Thayer N."/>
            <person name="Tice H."/>
            <person name="Tsai M."/>
            <person name="Ustaszewska A."/>
            <person name="Vo N."/>
            <person name="Wagner M."/>
            <person name="Wheeler J."/>
            <person name="Wu K."/>
            <person name="Xie G."/>
            <person name="Yang J."/>
            <person name="Dubchak I."/>
            <person name="Furey T.S."/>
            <person name="DeJong P."/>
            <person name="Dickson M."/>
            <person name="Gordon D."/>
            <person name="Eichler E.E."/>
            <person name="Pennacchio L.A."/>
            <person name="Richardson P."/>
            <person name="Stubbs L."/>
            <person name="Rokhsar D.S."/>
            <person name="Myers R.M."/>
            <person name="Rubin E.M."/>
            <person name="Lucas S.M."/>
        </authorList>
    </citation>
    <scope>NUCLEOTIDE SEQUENCE [LARGE SCALE GENOMIC DNA]</scope>
</reference>
<reference key="4">
    <citation type="journal article" date="2004" name="Genome Res.">
        <title>The status, quality, and expansion of the NIH full-length cDNA project: the Mammalian Gene Collection (MGC).</title>
        <authorList>
            <consortium name="The MGC Project Team"/>
        </authorList>
    </citation>
    <scope>NUCLEOTIDE SEQUENCE [LARGE SCALE MRNA]</scope>
    <scope>VARIANT MET-5</scope>
    <source>
        <tissue>B-cell</tissue>
    </source>
</reference>
<reference key="5">
    <citation type="journal article" date="1999" name="Genes Dev.">
        <title>The yeast exosome and human PM-Scl are related complexes of 3'--&gt;5' exonucleases.</title>
        <authorList>
            <person name="Allmang C."/>
            <person name="Petfalski E."/>
            <person name="Podtelejnikov A."/>
            <person name="Mann M."/>
            <person name="Tollervey D."/>
            <person name="Mitchell P."/>
        </authorList>
    </citation>
    <scope>CHARACTERIZATION</scope>
</reference>
<reference key="6">
    <citation type="journal article" date="2001" name="Cell">
        <title>AU binding proteins recruit the exosome to degrade ARE-containing mRNAs.</title>
        <authorList>
            <person name="Chen C.-Y."/>
            <person name="Gherzi R."/>
            <person name="Ong S.-E."/>
            <person name="Chan E.L."/>
            <person name="Raijmakers R."/>
            <person name="Pruijn G.J.M."/>
            <person name="Stoecklin G."/>
            <person name="Moroni C."/>
            <person name="Mann M."/>
            <person name="Karin M."/>
        </authorList>
    </citation>
    <scope>IDENTIFICATION BY MASS SPECTROMETRY</scope>
    <scope>IDENTIFICATION IN THE RNA EXOSOME CORE COMPLEX</scope>
</reference>
<reference key="7">
    <citation type="journal article" date="2002" name="EMBO J.">
        <title>The mammalian exosome mediates the efficient degradation of mRNAs that contain AU-rich elements.</title>
        <authorList>
            <person name="Mukherjee D."/>
            <person name="Gao M."/>
            <person name="O'Connor J.P."/>
            <person name="Raijmakers R."/>
            <person name="Pruijn G."/>
            <person name="Lutz C.S."/>
            <person name="Wilusz J."/>
        </authorList>
    </citation>
    <scope>FUNCTION IN CYTOPLASMIC MRNA DEGRADATION</scope>
</reference>
<reference key="8">
    <citation type="journal article" date="2002" name="J. Mol. Biol.">
        <title>Protein-protein interactions of hCsl4p with other human exosome subunits.</title>
        <authorList>
            <person name="Raijmakers R."/>
            <person name="Noordman Y.E."/>
            <person name="van Venrooij W.J."/>
            <person name="Pruijn G.J.M."/>
        </authorList>
    </citation>
    <scope>SUBCELLULAR LOCATION</scope>
    <scope>INTERACTION WITH EXOSC1</scope>
</reference>
<reference key="9">
    <citation type="journal article" date="2007" name="Proc. Natl. Acad. Sci. U.S.A.">
        <title>The zinc-finger antiviral protein recruits the RNA processing exosome to degrade the target mRNA.</title>
        <authorList>
            <person name="Guo X."/>
            <person name="Ma J."/>
            <person name="Sun J."/>
            <person name="Gao G."/>
        </authorList>
    </citation>
    <scope>INTERACTION WITH ZC3HAV1</scope>
</reference>
<reference key="10">
    <citation type="journal article" date="2008" name="Proc. Natl. Acad. Sci. U.S.A.">
        <title>p72 DEAD box RNA helicase is required for optimal function of the zinc-finger antiviral protein.</title>
        <authorList>
            <person name="Chen G."/>
            <person name="Guo X."/>
            <person name="Lv F."/>
            <person name="Xu Y."/>
            <person name="Gao G."/>
        </authorList>
    </citation>
    <scope>INTERACTION WITH DDX17</scope>
</reference>
<reference key="11">
    <citation type="journal article" date="2010" name="EMBO J.">
        <title>Dis3-like 1: a novel exoribonuclease associated with the human exosome.</title>
        <authorList>
            <person name="Staals R.H."/>
            <person name="Bronkhorst A.W."/>
            <person name="Schilders G."/>
            <person name="Slomovic S."/>
            <person name="Schuster G."/>
            <person name="Heck A.J."/>
            <person name="Raijmakers R."/>
            <person name="Pruijn G.J."/>
        </authorList>
    </citation>
    <scope>IDENTIFICATION IN THE RNA EXOSOME COMPLEX</scope>
    <scope>IDENTIFICATION BY MASS SPECTROMETRY</scope>
</reference>
<reference key="12">
    <citation type="journal article" date="2010" name="Sci. Signal.">
        <title>Quantitative phosphoproteomics reveals widespread full phosphorylation site occupancy during mitosis.</title>
        <authorList>
            <person name="Olsen J.V."/>
            <person name="Vermeulen M."/>
            <person name="Santamaria A."/>
            <person name="Kumar C."/>
            <person name="Miller M.L."/>
            <person name="Jensen L.J."/>
            <person name="Gnad F."/>
            <person name="Cox J."/>
            <person name="Jensen T.S."/>
            <person name="Nigg E.A."/>
            <person name="Brunak S."/>
            <person name="Mann M."/>
        </authorList>
    </citation>
    <scope>PHOSPHORYLATION [LARGE SCALE ANALYSIS] AT SER-20</scope>
    <scope>IDENTIFICATION BY MASS SPECTROMETRY [LARGE SCALE ANALYSIS]</scope>
    <source>
        <tissue>Cervix carcinoma</tissue>
    </source>
</reference>
<reference key="13">
    <citation type="journal article" date="2011" name="BMC Syst. Biol.">
        <title>Initial characterization of the human central proteome.</title>
        <authorList>
            <person name="Burkard T.R."/>
            <person name="Planyavsky M."/>
            <person name="Kaupe I."/>
            <person name="Breitwieser F.P."/>
            <person name="Buerckstuemmer T."/>
            <person name="Bennett K.L."/>
            <person name="Superti-Furga G."/>
            <person name="Colinge J."/>
        </authorList>
    </citation>
    <scope>IDENTIFICATION BY MASS SPECTROMETRY [LARGE SCALE ANALYSIS]</scope>
</reference>
<reference key="14">
    <citation type="journal article" date="2011" name="Cell">
        <title>The RNA exosome targets the AID cytidine deaminase to both strands of transcribed duplex DNA substrates.</title>
        <authorList>
            <person name="Basu U."/>
            <person name="Meng F.L."/>
            <person name="Keim C."/>
            <person name="Grinstein V."/>
            <person name="Pefanis E."/>
            <person name="Eccleston J."/>
            <person name="Zhang T."/>
            <person name="Myers D."/>
            <person name="Wasserman C.R."/>
            <person name="Wesemann D.R."/>
            <person name="Januszyk K."/>
            <person name="Gregory R.I."/>
            <person name="Deng H."/>
            <person name="Lima C.D."/>
            <person name="Alt F.W."/>
        </authorList>
    </citation>
    <scope>FUNCTION IN DEAMINATION OF TRANSCRIBED DNA SUBSTRATE</scope>
</reference>
<reference key="15">
    <citation type="journal article" date="2011" name="FASEB J.">
        <title>Modulation of exosome-mediated mRNA turnover by interaction of GTP-binding protein 1 (GTPBP1) with its target mRNAs.</title>
        <authorList>
            <person name="Woo K.C."/>
            <person name="Kim T.D."/>
            <person name="Lee K.H."/>
            <person name="Kim D.Y."/>
            <person name="Kim S."/>
            <person name="Lee H.R."/>
            <person name="Kang H.J."/>
            <person name="Chung S.J."/>
            <person name="Senju S."/>
            <person name="Nishimura Y."/>
            <person name="Kim K.T."/>
        </authorList>
    </citation>
    <scope>INTERACTION WITH GTPBP1</scope>
</reference>
<reference key="16">
    <citation type="journal article" date="2011" name="Sci. Signal.">
        <title>System-wide temporal characterization of the proteome and phosphoproteome of human embryonic stem cell differentiation.</title>
        <authorList>
            <person name="Rigbolt K.T."/>
            <person name="Prokhorova T.A."/>
            <person name="Akimov V."/>
            <person name="Henningsen J."/>
            <person name="Johansen P.T."/>
            <person name="Kratchmarova I."/>
            <person name="Kassem M."/>
            <person name="Mann M."/>
            <person name="Olsen J.V."/>
            <person name="Blagoev B."/>
        </authorList>
    </citation>
    <scope>IDENTIFICATION BY MASS SPECTROMETRY [LARGE SCALE ANALYSIS]</scope>
</reference>
<reference key="17">
    <citation type="journal article" date="2013" name="J. Proteome Res.">
        <title>Toward a comprehensive characterization of a human cancer cell phosphoproteome.</title>
        <authorList>
            <person name="Zhou H."/>
            <person name="Di Palma S."/>
            <person name="Preisinger C."/>
            <person name="Peng M."/>
            <person name="Polat A.N."/>
            <person name="Heck A.J."/>
            <person name="Mohammed S."/>
        </authorList>
    </citation>
    <scope>PHOSPHORYLATION [LARGE SCALE ANALYSIS] AT SER-20</scope>
    <scope>IDENTIFICATION BY MASS SPECTROMETRY [LARGE SCALE ANALYSIS]</scope>
    <source>
        <tissue>Erythroleukemia</tissue>
    </source>
</reference>
<reference evidence="19" key="18">
    <citation type="journal article" date="2006" name="Cell">
        <title>Reconstitution, activities, and structure of the eukaryotic RNA exosome.</title>
        <authorList>
            <person name="Liu Q."/>
            <person name="Greimann J.C."/>
            <person name="Lima C.D."/>
        </authorList>
    </citation>
    <scope>X-RAY CRYSTALLOGRAPHY (3.35 ANGSTROMS)</scope>
    <scope>LACK OF CATALYTIC ACTIVITY</scope>
    <scope>RECONSTITUTION OF THE RNA EXOSOME CORE COMPLEX</scope>
</reference>
<reference key="19">
    <citation type="journal article" date="2007" name="Cell">
        <authorList>
            <person name="Liu Q."/>
            <person name="Greimann J.C."/>
            <person name="Lima C.D."/>
        </authorList>
    </citation>
    <scope>ERRATUM OF PUBMED:17174896</scope>
</reference>
<reference key="20">
    <citation type="journal article" date="2010" name="RNA">
        <title>Structural and biochemical characterization of CRN-5 and Rrp46: an exosome component participating in apoptotic DNA degradation.</title>
        <authorList>
            <person name="Yang C.C."/>
            <person name="Wang Y.T."/>
            <person name="Hsiao Y.Y."/>
            <person name="Doudeva L.G."/>
            <person name="Kuo P.H."/>
            <person name="Chow S.Y."/>
            <person name="Yuan H.S."/>
        </authorList>
    </citation>
    <scope>FUNCTION</scope>
    <scope>SUBUNIT</scope>
</reference>
<reference evidence="20 21" key="21">
    <citation type="journal article" date="2018" name="Cell">
        <title>Helicase-Dependent RNA Decay Illuminated by a Cryo-EM Structure of a Human Nuclear RNA Exosome-MTR4 Complex.</title>
        <authorList>
            <person name="Weick E.M."/>
            <person name="Puno M.R."/>
            <person name="Januszyk K."/>
            <person name="Zinder J.C."/>
            <person name="DiMattia M.A."/>
            <person name="Lima C.D."/>
        </authorList>
    </citation>
    <scope>STRUCTURE BY ELECTRON MICROSCOPY (3.45 ANGSTROMS)</scope>
    <scope>SUBUNIT</scope>
</reference>
<reference evidence="22" key="22">
    <citation type="journal article" date="2018" name="Elife">
        <title>Distinct and evolutionary conserved structural features of the human nuclear exosome complex.</title>
        <authorList>
            <person name="Gerlach P."/>
            <person name="Schuller J.M."/>
            <person name="Bonneau F."/>
            <person name="Basquin J."/>
            <person name="Reichelt P."/>
            <person name="Falk S."/>
            <person name="Conti E."/>
        </authorList>
    </citation>
    <scope>STRUCTURE BY ELECTRON MICROSCOPY (3.80 ANGSTROMS) OF THE RNA EXOSOME COMPLEX IN COMPLEX WITH MPP6</scope>
    <scope>SUBUNIT</scope>
</reference>
<reference key="23">
    <citation type="journal article" date="2019" name="Clin. Genet.">
        <title>Identification of disease-causing variants in the EXOSC gene family underlying autosomal recessive intellectual disability in Iranian families.</title>
        <authorList>
            <person name="Beheshtian M."/>
            <person name="Fattahi Z."/>
            <person name="Fadaee M."/>
            <person name="Vazehan R."/>
            <person name="Jamali P."/>
            <person name="Parsimehr E."/>
            <person name="Kamgar M."/>
            <person name="Zonooz M.F."/>
            <person name="Mahdavi S.S."/>
            <person name="Kalhor Z."/>
            <person name="Arzhangi S."/>
            <person name="Abedini S.S."/>
            <person name="Kermani F.S."/>
            <person name="Mojahedi F."/>
            <person name="Kalscheuer V.M."/>
            <person name="Ropers H.H."/>
            <person name="Kariminejad A."/>
            <person name="Najmabadi H."/>
            <person name="Kahrizi K."/>
        </authorList>
    </citation>
    <scope>INVOLVEMENT IN CABAC</scope>
    <scope>VARIANT CABAC ILE-114</scope>
</reference>
<reference key="24">
    <citation type="journal article" date="2020" name="Hum. Mol. Genet.">
        <title>Biallelic variants in the RNA exosome gene EXOSC5 are associated with developmental delays, short stature, cerebellar hypoplasia and motor weakness.</title>
        <authorList>
            <person name="Slavotinek A."/>
            <person name="Misceo D."/>
            <person name="Htun S."/>
            <person name="Mathisen L."/>
            <person name="Frengen E."/>
            <person name="Foreman M."/>
            <person name="Hurtig J.E."/>
            <person name="Enyenihi L."/>
            <person name="Sterrett M.C."/>
            <person name="Leung S.W."/>
            <person name="Schneidman-Duhovny D."/>
            <person name="Estrada-Veras J."/>
            <person name="Duncan J.L."/>
            <person name="Haaxma C.A."/>
            <person name="Kamsteeg E.J."/>
            <person name="Xia V."/>
            <person name="Beleford D."/>
            <person name="Si Y."/>
            <person name="Douglas G."/>
            <person name="Treidene H.E."/>
            <person name="van Hoof A."/>
            <person name="Fasken M.B."/>
            <person name="Corbett A.H."/>
        </authorList>
    </citation>
    <scope>INVOLVEMENT IN CABAC</scope>
    <scope>VARIANTS CABAC ILE-114; THR-148 AND HIS-206</scope>
    <scope>CHARACTERIZATION OF VARIANTS CABAC ILE-114; THR-148 AND HIS-206</scope>
</reference>
<reference key="25">
    <citation type="journal article" date="2021" name="Am. J. Med. Genet. A">
        <title>Risk of sudden cardiac death in EXOSC5-related disease.</title>
        <authorList>
            <person name="Calame D.G."/>
            <person name="Herman I."/>
            <person name="Fatih J.M."/>
            <person name="Du H."/>
            <person name="Akay G."/>
            <person name="Jhangiani S.N."/>
            <person name="Coban-Akdemir Z."/>
            <person name="Milewicz D.M."/>
            <person name="Gibbs R.A."/>
            <person name="Posey J.E."/>
            <person name="Marafi D."/>
            <person name="Hunter J.V."/>
            <person name="Fan Y."/>
            <person name="Lupski J.R."/>
            <person name="Miyake C.Y."/>
        </authorList>
    </citation>
    <scope>INVOLVEMENT IN CABAC</scope>
    <scope>VARIANTS CABAC LYS-101 AND ILE-114</scope>
</reference>
<organism>
    <name type="scientific">Homo sapiens</name>
    <name type="common">Human</name>
    <dbReference type="NCBI Taxonomy" id="9606"/>
    <lineage>
        <taxon>Eukaryota</taxon>
        <taxon>Metazoa</taxon>
        <taxon>Chordata</taxon>
        <taxon>Craniata</taxon>
        <taxon>Vertebrata</taxon>
        <taxon>Euteleostomi</taxon>
        <taxon>Mammalia</taxon>
        <taxon>Eutheria</taxon>
        <taxon>Euarchontoglires</taxon>
        <taxon>Primates</taxon>
        <taxon>Haplorrhini</taxon>
        <taxon>Catarrhini</taxon>
        <taxon>Hominidae</taxon>
        <taxon>Homo</taxon>
    </lineage>
</organism>
<comment type="function">
    <text evidence="3 9 10">Non-catalytic component of the RNA exosome complex which has 3'-&gt;5' exoribonuclease activity and participates in a multitude of cellular RNA processing and degradation events. In the nucleus, the RNA exosome complex is involved in proper maturation of stable RNA species such as rRNA, snRNA and snoRNA, in the elimination of RNA processing by-products and non-coding 'pervasive' transcripts, such as antisense RNA species and promoter-upstream transcripts (PROMPTs), and of mRNAs with processing defects, thereby limiting or excluding their export to the cytoplasm. The RNA exosome may be involved in Ig class switch recombination (CSR) and/or Ig variable region somatic hypermutation (SHM) by targeting AICDA deamination activity to transcribed dsDNA substrates. In the cytoplasm, the RNA exosome complex is involved in general mRNA turnover and specifically degrades inherently unstable mRNAs containing AU-rich elements (AREs) within their 3' untranslated regions, and in RNA surveillance pathways, preventing translation of aberrant mRNAs. It seems to be involved in degradation of histone mRNA. The catalytic inactive RNA exosome core complex of 9 subunits (Exo-9) is proposed to play a pivotal role in the binding and presentation of RNA for ribonucleolysis, and to serve as a scaffold for the association with catalytic subunits and accessory proteins or complexes (PubMed:11782436, PubMed:21269460). In vitro, EXOSC5 does not bind or digest single-stranded RNA and binds to double-stranded DNA without detectable DNase activity (PubMed:20660080).</text>
</comment>
<comment type="subunit">
    <text evidence="2 6 7 8 9 11 12 13">Homodimer (PubMed:20660080). Component of the RNA exosome core complex (Exo-9), composed of EXOSC1, EXOSC2, EXOSC3, EXOSC4, EXOSC5, EXOSC6, EXOSC7, EXOSC8 and EXOSC9; within the complex interacts with EXOSC3, EXOSC8, and EXOSC9 (PubMed:29906447, PubMed:30047866). The catalytically inactive RNA exosome core complex (Exo-9) associates with the catalytic subunit EXOSC10/RRP6 (PubMed:11719186, PubMed:20531389, PubMed:29906447). Exo-9 may associate with DIS3 to form the nucleolar exosome complex, or DIS3L to form the cytoplasmic exosome complex (PubMed:11719186, PubMed:20531389, PubMed:29906447). Exo-9 is formed by a hexameric base ring consisting of the heterodimers EXOSC4-EXOSC9, EXOSC5-EXOSC8 and EXOSC6-EXOSC7, and a cap ring consisting of EXOSC1, EXOSC2 and EXOSC3 (PubMed:11719186, PubMed:20531389, PubMed:30047866). The RNA exosome complex associates with cofactors C1D/RRP47, MPHOSPH6/MPP6 and MTREX/MTR4 (PubMed:30047866). Interacts with GTPBP1 (PubMed:21515746). Interacts with ZC3HAV1 (PubMed:17185417). Interacts with DDX17 only in the presence of ZC3HAV1 in an RNA-independent manner (PubMed:18334637).</text>
</comment>
<comment type="interaction">
    <interactant intactId="EBI-371876">
        <id>Q9NQT4</id>
    </interactant>
    <interactant intactId="EBI-17721098">
        <id>Q8WXI4-2</id>
        <label>ACOT11</label>
    </interactant>
    <organismsDiffer>false</organismsDiffer>
    <experiments>3</experiments>
</comment>
<comment type="interaction">
    <interactant intactId="EBI-371876">
        <id>Q9NQT4</id>
    </interactant>
    <interactant intactId="EBI-10173507">
        <id>Q6UY14-3</id>
        <label>ADAMTSL4</label>
    </interactant>
    <organismsDiffer>false</organismsDiffer>
    <experiments>3</experiments>
</comment>
<comment type="interaction">
    <interactant intactId="EBI-371876">
        <id>Q9NQT4</id>
    </interactant>
    <interactant intactId="EBI-514538">
        <id>Q13490</id>
        <label>BIRC2</label>
    </interactant>
    <organismsDiffer>false</organismsDiffer>
    <experiments>6</experiments>
</comment>
<comment type="interaction">
    <interactant intactId="EBI-371876">
        <id>Q9NQT4</id>
    </interactant>
    <interactant intactId="EBI-10193358">
        <id>Q96GS4</id>
        <label>BORCS6</label>
    </interactant>
    <organismsDiffer>false</organismsDiffer>
    <experiments>3</experiments>
</comment>
<comment type="interaction">
    <interactant intactId="EBI-371876">
        <id>Q9NQT4</id>
    </interactant>
    <interactant intactId="EBI-739580">
        <id>Q13137</id>
        <label>CALCOCO2</label>
    </interactant>
    <organismsDiffer>false</organismsDiffer>
    <experiments>3</experiments>
</comment>
<comment type="interaction">
    <interactant intactId="EBI-371876">
        <id>Q9NQT4</id>
    </interactant>
    <interactant intactId="EBI-347573">
        <id>A6NC98</id>
        <label>CCDC88B</label>
    </interactant>
    <organismsDiffer>false</organismsDiffer>
    <experiments>3</experiments>
</comment>
<comment type="interaction">
    <interactant intactId="EBI-371876">
        <id>Q9NQT4</id>
    </interactant>
    <interactant intactId="EBI-742054">
        <id>Q96D03</id>
        <label>DDIT4L</label>
    </interactant>
    <organismsDiffer>false</organismsDiffer>
    <experiments>3</experiments>
</comment>
<comment type="interaction">
    <interactant intactId="EBI-371876">
        <id>Q9NQT4</id>
    </interactant>
    <interactant intactId="EBI-10174653">
        <id>Q8NF50-2</id>
        <label>DOCK8</label>
    </interactant>
    <organismsDiffer>false</organismsDiffer>
    <experiments>3</experiments>
</comment>
<comment type="interaction">
    <interactant intactId="EBI-371876">
        <id>Q9NQT4</id>
    </interactant>
    <interactant intactId="EBI-2349927">
        <id>Q5JST6</id>
        <label>EFHC2</label>
    </interactant>
    <organismsDiffer>false</organismsDiffer>
    <experiments>3</experiments>
</comment>
<comment type="interaction">
    <interactant intactId="EBI-371876">
        <id>Q9NQT4</id>
    </interactant>
    <interactant intactId="EBI-371892">
        <id>Q9Y3B2</id>
        <label>EXOSC1</label>
    </interactant>
    <organismsDiffer>false</organismsDiffer>
    <experiments>35</experiments>
</comment>
<comment type="interaction">
    <interactant intactId="EBI-371876">
        <id>Q9NQT4</id>
    </interactant>
    <interactant intactId="EBI-358236">
        <id>Q01780</id>
        <label>EXOSC10</label>
    </interactant>
    <organismsDiffer>false</organismsDiffer>
    <experiments>7</experiments>
</comment>
<comment type="interaction">
    <interactant intactId="EBI-371876">
        <id>Q9NQT4</id>
    </interactant>
    <interactant intactId="EBI-371866">
        <id>Q9NQT5</id>
        <label>EXOSC3</label>
    </interactant>
    <organismsDiffer>false</organismsDiffer>
    <experiments>12</experiments>
</comment>
<comment type="interaction">
    <interactant intactId="EBI-371876">
        <id>Q9NQT4</id>
    </interactant>
    <interactant intactId="EBI-371922">
        <id>Q96B26</id>
        <label>EXOSC8</label>
    </interactant>
    <organismsDiffer>false</organismsDiffer>
    <experiments>25</experiments>
</comment>
<comment type="interaction">
    <interactant intactId="EBI-371876">
        <id>Q9NQT4</id>
    </interactant>
    <interactant intactId="EBI-11977403">
        <id>A0A0C3SFZ9</id>
        <label>FCHO1</label>
    </interactant>
    <organismsDiffer>false</organismsDiffer>
    <experiments>3</experiments>
</comment>
<comment type="interaction">
    <interactant intactId="EBI-371876">
        <id>Q9NQT4</id>
    </interactant>
    <interactant intactId="EBI-719823">
        <id>O14526</id>
        <label>FCHO1</label>
    </interactant>
    <organismsDiffer>false</organismsDiffer>
    <experiments>4</experiments>
</comment>
<comment type="interaction">
    <interactant intactId="EBI-371876">
        <id>Q9NQT4</id>
    </interactant>
    <interactant intactId="EBI-1050358">
        <id>P07954</id>
        <label>FH</label>
    </interactant>
    <organismsDiffer>false</organismsDiffer>
    <experiments>4</experiments>
</comment>
<comment type="interaction">
    <interactant intactId="EBI-371876">
        <id>Q9NQT4</id>
    </interactant>
    <interactant intactId="EBI-618309">
        <id>Q08379</id>
        <label>GOLGA2</label>
    </interactant>
    <organismsDiffer>false</organismsDiffer>
    <experiments>3</experiments>
</comment>
<comment type="interaction">
    <interactant intactId="EBI-371876">
        <id>Q9NQT4</id>
    </interactant>
    <interactant intactId="EBI-3923226">
        <id>P09017</id>
        <label>HOXC4</label>
    </interactant>
    <organismsDiffer>false</organismsDiffer>
    <experiments>3</experiments>
</comment>
<comment type="interaction">
    <interactant intactId="EBI-371876">
        <id>Q9NQT4</id>
    </interactant>
    <interactant intactId="EBI-747204">
        <id>Q9UKT9</id>
        <label>IKZF3</label>
    </interactant>
    <organismsDiffer>false</organismsDiffer>
    <experiments>7</experiments>
</comment>
<comment type="interaction">
    <interactant intactId="EBI-371876">
        <id>Q9NQT4</id>
    </interactant>
    <interactant intactId="EBI-742916">
        <id>Q8WZ19</id>
        <label>KCTD13</label>
    </interactant>
    <organismsDiffer>false</organismsDiffer>
    <experiments>3</experiments>
</comment>
<comment type="interaction">
    <interactant intactId="EBI-371876">
        <id>Q9NQT4</id>
    </interactant>
    <interactant intactId="EBI-10171552">
        <id>A1A4E9</id>
        <label>KRT13</label>
    </interactant>
    <organismsDiffer>false</organismsDiffer>
    <experiments>3</experiments>
</comment>
<comment type="interaction">
    <interactant intactId="EBI-371876">
        <id>Q9NQT4</id>
    </interactant>
    <interactant intactId="EBI-3044087">
        <id>Q7Z3Y8</id>
        <label>KRT27</label>
    </interactant>
    <organismsDiffer>false</organismsDiffer>
    <experiments>3</experiments>
</comment>
<comment type="interaction">
    <interactant intactId="EBI-371876">
        <id>Q9NQT4</id>
    </interactant>
    <interactant intactId="EBI-948001">
        <id>Q15323</id>
        <label>KRT31</label>
    </interactant>
    <organismsDiffer>false</organismsDiffer>
    <experiments>3</experiments>
</comment>
<comment type="interaction">
    <interactant intactId="EBI-371876">
        <id>Q9NQT4</id>
    </interactant>
    <interactant intactId="EBI-1047093">
        <id>O76011</id>
        <label>KRT34</label>
    </interactant>
    <organismsDiffer>false</organismsDiffer>
    <experiments>3</experiments>
</comment>
<comment type="interaction">
    <interactant intactId="EBI-371876">
        <id>Q9NQT4</id>
    </interactant>
    <interactant intactId="EBI-1058674">
        <id>Q92764</id>
        <label>KRT35</label>
    </interactant>
    <organismsDiffer>false</organismsDiffer>
    <experiments>3</experiments>
</comment>
<comment type="interaction">
    <interactant intactId="EBI-371876">
        <id>Q9NQT4</id>
    </interactant>
    <interactant intactId="EBI-8473670">
        <id>O95447</id>
        <label>LCA5L</label>
    </interactant>
    <organismsDiffer>false</organismsDiffer>
    <experiments>3</experiments>
</comment>
<comment type="interaction">
    <interactant intactId="EBI-371876">
        <id>Q9NQT4</id>
    </interactant>
    <interactant intactId="EBI-18393842">
        <id>A0A087WWI0</id>
        <label>LRMDA</label>
    </interactant>
    <organismsDiffer>false</organismsDiffer>
    <experiments>3</experiments>
</comment>
<comment type="interaction">
    <interactant intactId="EBI-371876">
        <id>Q9NQT4</id>
    </interactant>
    <interactant intactId="EBI-741037">
        <id>Q9BRK4</id>
        <label>LZTS2</label>
    </interactant>
    <organismsDiffer>false</organismsDiffer>
    <experiments>3</experiments>
</comment>
<comment type="interaction">
    <interactant intactId="EBI-371876">
        <id>Q9NQT4</id>
    </interactant>
    <interactant intactId="EBI-16439278">
        <id>Q6FHY5</id>
        <label>MEOX2</label>
    </interactant>
    <organismsDiffer>false</organismsDiffer>
    <experiments>3</experiments>
</comment>
<comment type="interaction">
    <interactant intactId="EBI-371876">
        <id>Q9NQT4</id>
    </interactant>
    <interactant intactId="EBI-371938">
        <id>Q13615</id>
        <label>MTMR3</label>
    </interactant>
    <organismsDiffer>false</organismsDiffer>
    <experiments>3</experiments>
</comment>
<comment type="interaction">
    <interactant intactId="EBI-371876">
        <id>Q9NQT4</id>
    </interactant>
    <interactant intactId="EBI-6952711">
        <id>Q8WY64</id>
        <label>MYLIP</label>
    </interactant>
    <organismsDiffer>false</organismsDiffer>
    <experiments>3</experiments>
</comment>
<comment type="interaction">
    <interactant intactId="EBI-371876">
        <id>Q9NQT4</id>
    </interactant>
    <interactant intactId="EBI-3920396">
        <id>Q6ZUT1</id>
        <label>NKAPD1</label>
    </interactant>
    <organismsDiffer>false</organismsDiffer>
    <experiments>3</experiments>
</comment>
<comment type="interaction">
    <interactant intactId="EBI-371876">
        <id>Q9NQT4</id>
    </interactant>
    <interactant intactId="EBI-6259410">
        <id>Q86TG7-2</id>
        <label>PEG10</label>
    </interactant>
    <organismsDiffer>false</organismsDiffer>
    <experiments>3</experiments>
</comment>
<comment type="interaction">
    <interactant intactId="EBI-371876">
        <id>Q9NQT4</id>
    </interactant>
    <interactant intactId="EBI-79165">
        <id>Q9NRD5</id>
        <label>PICK1</label>
    </interactant>
    <organismsDiffer>false</organismsDiffer>
    <experiments>3</experiments>
</comment>
<comment type="interaction">
    <interactant intactId="EBI-371876">
        <id>Q9NQT4</id>
    </interactant>
    <interactant intactId="EBI-10232538">
        <id>Q8WWB5</id>
        <label>PIH1D2</label>
    </interactant>
    <organismsDiffer>false</organismsDiffer>
    <experiments>3</experiments>
</comment>
<comment type="interaction">
    <interactant intactId="EBI-371876">
        <id>Q9NQT4</id>
    </interactant>
    <interactant intactId="EBI-11320284">
        <id>Q9NQX0</id>
        <label>PRDM6</label>
    </interactant>
    <organismsDiffer>false</organismsDiffer>
    <experiments>3</experiments>
</comment>
<comment type="interaction">
    <interactant intactId="EBI-371876">
        <id>Q9NQT4</id>
    </interactant>
    <interactant intactId="EBI-307352">
        <id>Q04864</id>
        <label>REL</label>
    </interactant>
    <organismsDiffer>false</organismsDiffer>
    <experiments>3</experiments>
</comment>
<comment type="interaction">
    <interactant intactId="EBI-371876">
        <id>Q9NQT4</id>
    </interactant>
    <interactant intactId="EBI-10829018">
        <id>Q04864-2</id>
        <label>REL</label>
    </interactant>
    <organismsDiffer>false</organismsDiffer>
    <experiments>3</experiments>
</comment>
<comment type="interaction">
    <interactant intactId="EBI-371876">
        <id>Q9NQT4</id>
    </interactant>
    <interactant intactId="EBI-12037847">
        <id>Q6ZSJ9</id>
        <label>SHISA6</label>
    </interactant>
    <organismsDiffer>false</organismsDiffer>
    <experiments>3</experiments>
</comment>
<comment type="interaction">
    <interactant intactId="EBI-371876">
        <id>Q9NQT4</id>
    </interactant>
    <interactant intactId="EBI-632715">
        <id>Q13573</id>
        <label>SNW1</label>
    </interactant>
    <organismsDiffer>false</organismsDiffer>
    <experiments>4</experiments>
</comment>
<comment type="interaction">
    <interactant intactId="EBI-371876">
        <id>Q9NQT4</id>
    </interactant>
    <interactant intactId="EBI-375617">
        <id>P02549</id>
        <label>SPTA1</label>
    </interactant>
    <organismsDiffer>false</organismsDiffer>
    <experiments>3</experiments>
</comment>
<comment type="interaction">
    <interactant intactId="EBI-371876">
        <id>Q9NQT4</id>
    </interactant>
    <interactant intactId="EBI-1105213">
        <id>Q9UBB9</id>
        <label>TFIP11</label>
    </interactant>
    <organismsDiffer>false</organismsDiffer>
    <experiments>4</experiments>
</comment>
<comment type="interaction">
    <interactant intactId="EBI-371876">
        <id>Q9NQT4</id>
    </interactant>
    <interactant intactId="EBI-11741437">
        <id>Q08117-2</id>
        <label>TLE5</label>
    </interactant>
    <organismsDiffer>false</organismsDiffer>
    <experiments>3</experiments>
</comment>
<comment type="interaction">
    <interactant intactId="EBI-371876">
        <id>Q9NQT4</id>
    </interactant>
    <interactant intactId="EBI-2505861">
        <id>Q13829</id>
        <label>TNFAIP1</label>
    </interactant>
    <organismsDiffer>false</organismsDiffer>
    <experiments>6</experiments>
</comment>
<comment type="interaction">
    <interactant intactId="EBI-371876">
        <id>Q9NQT4</id>
    </interactant>
    <interactant intactId="EBI-492476">
        <id>Q96RU7</id>
        <label>TRIB3</label>
    </interactant>
    <organismsDiffer>false</organismsDiffer>
    <experiments>3</experiments>
</comment>
<comment type="interaction">
    <interactant intactId="EBI-371876">
        <id>Q9NQT4</id>
    </interactant>
    <interactant intactId="EBI-2130429">
        <id>Q9BYV2</id>
        <label>TRIM54</label>
    </interactant>
    <organismsDiffer>false</organismsDiffer>
    <experiments>6</experiments>
</comment>
<comment type="interaction">
    <interactant intactId="EBI-371876">
        <id>Q9NQT4</id>
    </interactant>
    <interactant intactId="EBI-6929619">
        <id>Q9BVG3</id>
        <label>TRIM62</label>
    </interactant>
    <organismsDiffer>false</organismsDiffer>
    <experiments>3</experiments>
</comment>
<comment type="interaction">
    <interactant intactId="EBI-371876">
        <id>Q9NQT4</id>
    </interactant>
    <interactant intactId="EBI-11419867">
        <id>Q8TF47</id>
        <label>ZFP90</label>
    </interactant>
    <organismsDiffer>false</organismsDiffer>
    <experiments>3</experiments>
</comment>
<comment type="interaction">
    <interactant intactId="EBI-371876">
        <id>Q9NQT4</id>
    </interactant>
    <interactant intactId="EBI-3923307">
        <id>Q8TAQ5</id>
        <label>ZNF420</label>
    </interactant>
    <organismsDiffer>false</organismsDiffer>
    <experiments>3</experiments>
</comment>
<comment type="interaction">
    <interactant intactId="EBI-371876">
        <id>Q9NQT4</id>
    </interactant>
    <interactant intactId="EBI-4395669">
        <id>Q6ZNG0</id>
        <label>ZNF620</label>
    </interactant>
    <organismsDiffer>false</organismsDiffer>
    <experiments>3</experiments>
</comment>
<comment type="interaction">
    <interactant intactId="EBI-371876">
        <id>Q9NQT4</id>
    </interactant>
    <interactant intactId="EBI-625509">
        <id>Q8N720</id>
        <label>ZNF655</label>
    </interactant>
    <organismsDiffer>false</organismsDiffer>
    <experiments>5</experiments>
</comment>
<comment type="interaction">
    <interactant intactId="EBI-371876">
        <id>Q9NQT4</id>
    </interactant>
    <interactant intactId="EBI-10240849">
        <id>Q3KQV3</id>
        <label>ZNF792</label>
    </interactant>
    <organismsDiffer>false</organismsDiffer>
    <experiments>3</experiments>
</comment>
<comment type="interaction">
    <interactant intactId="EBI-371876">
        <id>Q9NQT4</id>
    </interactant>
    <interactant intactId="EBI-8860250">
        <id>Q8K3Y6</id>
        <label>Zc3hav1</label>
    </interactant>
    <organismsDiffer>true</organismsDiffer>
    <experiments>6</experiments>
</comment>
<comment type="subcellular location">
    <subcellularLocation>
        <location evidence="4">Nucleus</location>
        <location evidence="4">Nucleolus</location>
    </subcellularLocation>
    <subcellularLocation>
        <location evidence="18">Cytoplasm</location>
    </subcellularLocation>
    <subcellularLocation>
        <location evidence="18">Nucleus</location>
    </subcellularLocation>
</comment>
<comment type="tissue specificity">
    <text>Highly expressed in a variety of hematopoietic and epithelial tumor cell lines, but not in normal hematopoietic tissues or other normal tissue, with the exception of testis.</text>
</comment>
<comment type="disease" evidence="14 15 16">
    <disease id="DI-06242">
        <name>Cerebellar ataxia, brain abnormalities, and cardiac conduction defects</name>
        <acronym>CABAC</acronym>
        <description>An autosomal recessive disorder characterized by global developmental delay, impaired intellectual development and speech delay that are observed in most patients. Disease manifestations are variable and include infantile-onset hypotonia, poor motor development, poor feeding and overall growth, and ataxic gait due to cerebellar ataxia. Additional variable features are dysarthria, nystagmus, variable ocular anomalies, spasticity, hyperreflexia, and non-specific dysmorphic features. Brain imaging shows cerebellar hypoplasia, often with brainstem hypoplasia, enlarged ventricles, delayed myelination, and thin corpus callosum. A significant number of patients develop cardiac conduction defects in childhood or adolescence.</description>
        <dbReference type="MIM" id="619576"/>
    </disease>
    <text>The disease is caused by variants affecting the gene represented in this entry.</text>
</comment>
<comment type="similarity">
    <text evidence="17">Belongs to the RNase PH family.</text>
</comment>
<comment type="caution">
    <text evidence="17">The six exosome core subunits containing a RNase PH-domain are not phosphorolytically active.</text>
</comment>
<comment type="sequence caution" evidence="17">
    <conflict type="erroneous initiation">
        <sequence resource="EMBL-CDS" id="AAM75154"/>
    </conflict>
    <text>Extended N-terminus.</text>
</comment>
<name>EXOS5_HUMAN</name>